<sequence length="163" mass="18089">MADSSFDVVSKVDRQEVDNALHQAAKELTTRFDFRNTGASIEWSGEETITLNADTEERLLAALDVFKEKLIRRDISLKAFDAGEPAQSGKIYKLSGTLVQGISSENAKKITKKIRDEGPKGVKAQIQGEELRVSSKKRDDLQGVISLLKGEDFGIALQFVNYR</sequence>
<organism>
    <name type="scientific">Rhodococcus erythropolis (strain PR4 / NBRC 100887)</name>
    <dbReference type="NCBI Taxonomy" id="234621"/>
    <lineage>
        <taxon>Bacteria</taxon>
        <taxon>Bacillati</taxon>
        <taxon>Actinomycetota</taxon>
        <taxon>Actinomycetes</taxon>
        <taxon>Mycobacteriales</taxon>
        <taxon>Nocardiaceae</taxon>
        <taxon>Rhodococcus</taxon>
        <taxon>Rhodococcus erythropolis group</taxon>
    </lineage>
</organism>
<evidence type="ECO:0000255" key="1">
    <source>
        <dbReference type="HAMAP-Rule" id="MF_00632"/>
    </source>
</evidence>
<gene>
    <name type="ordered locus">RER_17110</name>
</gene>
<name>Y1711_RHOE4</name>
<protein>
    <recommendedName>
        <fullName evidence="1">Nucleotide-binding protein RER_17110</fullName>
    </recommendedName>
</protein>
<comment type="function">
    <text evidence="1">Nucleotide-binding protein.</text>
</comment>
<comment type="similarity">
    <text evidence="1">Belongs to the YajQ family.</text>
</comment>
<dbReference type="EMBL" id="AP008957">
    <property type="protein sequence ID" value="BAH32419.1"/>
    <property type="molecule type" value="Genomic_DNA"/>
</dbReference>
<dbReference type="RefSeq" id="WP_003941854.1">
    <property type="nucleotide sequence ID" value="NC_012490.1"/>
</dbReference>
<dbReference type="SMR" id="C0ZV24"/>
<dbReference type="KEGG" id="rer:RER_17110"/>
<dbReference type="eggNOG" id="COG1666">
    <property type="taxonomic scope" value="Bacteria"/>
</dbReference>
<dbReference type="HOGENOM" id="CLU_099839_0_0_11"/>
<dbReference type="Proteomes" id="UP000002204">
    <property type="component" value="Chromosome"/>
</dbReference>
<dbReference type="GO" id="GO:0005829">
    <property type="term" value="C:cytosol"/>
    <property type="evidence" value="ECO:0007669"/>
    <property type="project" value="TreeGrafter"/>
</dbReference>
<dbReference type="GO" id="GO:0000166">
    <property type="term" value="F:nucleotide binding"/>
    <property type="evidence" value="ECO:0007669"/>
    <property type="project" value="TreeGrafter"/>
</dbReference>
<dbReference type="CDD" id="cd11740">
    <property type="entry name" value="YajQ_like"/>
    <property type="match status" value="1"/>
</dbReference>
<dbReference type="FunFam" id="3.30.70.860:FF:000004">
    <property type="entry name" value="UPF0234 protein AWC22_11905"/>
    <property type="match status" value="1"/>
</dbReference>
<dbReference type="Gene3D" id="3.30.70.860">
    <property type="match status" value="1"/>
</dbReference>
<dbReference type="Gene3D" id="3.30.70.990">
    <property type="entry name" value="YajQ-like, domain 2"/>
    <property type="match status" value="1"/>
</dbReference>
<dbReference type="HAMAP" id="MF_00632">
    <property type="entry name" value="YajQ"/>
    <property type="match status" value="1"/>
</dbReference>
<dbReference type="InterPro" id="IPR007551">
    <property type="entry name" value="DUF520"/>
</dbReference>
<dbReference type="InterPro" id="IPR035571">
    <property type="entry name" value="UPF0234-like_C"/>
</dbReference>
<dbReference type="InterPro" id="IPR035570">
    <property type="entry name" value="UPF0234_N"/>
</dbReference>
<dbReference type="InterPro" id="IPR036183">
    <property type="entry name" value="YajQ-like_sf"/>
</dbReference>
<dbReference type="NCBIfam" id="NF003819">
    <property type="entry name" value="PRK05412.1"/>
    <property type="match status" value="1"/>
</dbReference>
<dbReference type="PANTHER" id="PTHR30476">
    <property type="entry name" value="UPF0234 PROTEIN YAJQ"/>
    <property type="match status" value="1"/>
</dbReference>
<dbReference type="PANTHER" id="PTHR30476:SF0">
    <property type="entry name" value="UPF0234 PROTEIN YAJQ"/>
    <property type="match status" value="1"/>
</dbReference>
<dbReference type="Pfam" id="PF04461">
    <property type="entry name" value="DUF520"/>
    <property type="match status" value="1"/>
</dbReference>
<dbReference type="SUPFAM" id="SSF89963">
    <property type="entry name" value="YajQ-like"/>
    <property type="match status" value="2"/>
</dbReference>
<keyword id="KW-0547">Nucleotide-binding</keyword>
<proteinExistence type="inferred from homology"/>
<feature type="chain" id="PRO_1000212340" description="Nucleotide-binding protein RER_17110">
    <location>
        <begin position="1"/>
        <end position="163"/>
    </location>
</feature>
<accession>C0ZV24</accession>
<reference key="1">
    <citation type="submission" date="2005-03" db="EMBL/GenBank/DDBJ databases">
        <title>Comparison of the complete genome sequences of Rhodococcus erythropolis PR4 and Rhodococcus opacus B4.</title>
        <authorList>
            <person name="Takarada H."/>
            <person name="Sekine M."/>
            <person name="Hosoyama A."/>
            <person name="Yamada R."/>
            <person name="Fujisawa T."/>
            <person name="Omata S."/>
            <person name="Shimizu A."/>
            <person name="Tsukatani N."/>
            <person name="Tanikawa S."/>
            <person name="Fujita N."/>
            <person name="Harayama S."/>
        </authorList>
    </citation>
    <scope>NUCLEOTIDE SEQUENCE [LARGE SCALE GENOMIC DNA]</scope>
    <source>
        <strain>PR4 / NBRC 100887</strain>
    </source>
</reference>